<evidence type="ECO:0000255" key="1">
    <source>
        <dbReference type="HAMAP-Rule" id="MF_01394"/>
    </source>
</evidence>
<feature type="chain" id="PRO_0000362681" description="NADH-quinone oxidoreductase subunit A">
    <location>
        <begin position="1"/>
        <end position="147"/>
    </location>
</feature>
<feature type="transmembrane region" description="Helical" evidence="1">
    <location>
        <begin position="16"/>
        <end position="36"/>
    </location>
</feature>
<feature type="transmembrane region" description="Helical" evidence="1">
    <location>
        <begin position="68"/>
        <end position="88"/>
    </location>
</feature>
<feature type="transmembrane region" description="Helical" evidence="1">
    <location>
        <begin position="98"/>
        <end position="118"/>
    </location>
</feature>
<protein>
    <recommendedName>
        <fullName evidence="1">NADH-quinone oxidoreductase subunit A</fullName>
        <ecNumber evidence="1">7.1.1.-</ecNumber>
    </recommendedName>
    <alternativeName>
        <fullName evidence="1">NADH dehydrogenase I subunit A</fullName>
    </alternativeName>
    <alternativeName>
        <fullName evidence="1">NDH-1 subunit A</fullName>
    </alternativeName>
    <alternativeName>
        <fullName evidence="1">NUO1</fullName>
    </alternativeName>
</protein>
<sequence>MSMSTSTEVIAHHWAFAIFLIVAIGLCCLMLVGGWFLGGRARARSKNVPFESGIDSVGSARLRLSAKFYLVAMFFVIFDVEALYLFAWSTSIRESGWVGFVEAAIFIFVLLAGLVYLVRIGALDWTPARSRRERMNPETNSIANRQR</sequence>
<proteinExistence type="inferred from homology"/>
<organism>
    <name type="scientific">Escherichia coli (strain UTI89 / UPEC)</name>
    <dbReference type="NCBI Taxonomy" id="364106"/>
    <lineage>
        <taxon>Bacteria</taxon>
        <taxon>Pseudomonadati</taxon>
        <taxon>Pseudomonadota</taxon>
        <taxon>Gammaproteobacteria</taxon>
        <taxon>Enterobacterales</taxon>
        <taxon>Enterobacteriaceae</taxon>
        <taxon>Escherichia</taxon>
    </lineage>
</organism>
<name>NUOA_ECOUT</name>
<reference key="1">
    <citation type="journal article" date="2006" name="Proc. Natl. Acad. Sci. U.S.A.">
        <title>Identification of genes subject to positive selection in uropathogenic strains of Escherichia coli: a comparative genomics approach.</title>
        <authorList>
            <person name="Chen S.L."/>
            <person name="Hung C.-S."/>
            <person name="Xu J."/>
            <person name="Reigstad C.S."/>
            <person name="Magrini V."/>
            <person name="Sabo A."/>
            <person name="Blasiar D."/>
            <person name="Bieri T."/>
            <person name="Meyer R.R."/>
            <person name="Ozersky P."/>
            <person name="Armstrong J.R."/>
            <person name="Fulton R.S."/>
            <person name="Latreille J.P."/>
            <person name="Spieth J."/>
            <person name="Hooton T.M."/>
            <person name="Mardis E.R."/>
            <person name="Hultgren S.J."/>
            <person name="Gordon J.I."/>
        </authorList>
    </citation>
    <scope>NUCLEOTIDE SEQUENCE [LARGE SCALE GENOMIC DNA]</scope>
    <source>
        <strain>UTI89 / UPEC</strain>
    </source>
</reference>
<comment type="function">
    <text evidence="1">NDH-1 shuttles electrons from NADH, via FMN and iron-sulfur (Fe-S) centers, to quinones in the respiratory chain. The immediate electron acceptor for the enzyme in this species is believed to be ubiquinone. Couples the redox reaction to proton translocation (for every two electrons transferred, four hydrogen ions are translocated across the cytoplasmic membrane), and thus conserves the redox energy in a proton gradient.</text>
</comment>
<comment type="catalytic activity">
    <reaction evidence="1">
        <text>a quinone + NADH + 5 H(+)(in) = a quinol + NAD(+) + 4 H(+)(out)</text>
        <dbReference type="Rhea" id="RHEA:57888"/>
        <dbReference type="ChEBI" id="CHEBI:15378"/>
        <dbReference type="ChEBI" id="CHEBI:24646"/>
        <dbReference type="ChEBI" id="CHEBI:57540"/>
        <dbReference type="ChEBI" id="CHEBI:57945"/>
        <dbReference type="ChEBI" id="CHEBI:132124"/>
    </reaction>
</comment>
<comment type="subunit">
    <text evidence="1">NDH-1 is composed of 13 different subunits. Subunits NuoA, H, J, K, L, M, N constitute the membrane sector of the complex.</text>
</comment>
<comment type="subcellular location">
    <subcellularLocation>
        <location evidence="1">Cell inner membrane</location>
        <topology evidence="1">Multi-pass membrane protein</topology>
    </subcellularLocation>
</comment>
<comment type="similarity">
    <text evidence="1">Belongs to the complex I subunit 3 family.</text>
</comment>
<keyword id="KW-0997">Cell inner membrane</keyword>
<keyword id="KW-1003">Cell membrane</keyword>
<keyword id="KW-0472">Membrane</keyword>
<keyword id="KW-0520">NAD</keyword>
<keyword id="KW-0874">Quinone</keyword>
<keyword id="KW-1278">Translocase</keyword>
<keyword id="KW-0812">Transmembrane</keyword>
<keyword id="KW-1133">Transmembrane helix</keyword>
<keyword id="KW-0813">Transport</keyword>
<keyword id="KW-0830">Ubiquinone</keyword>
<accession>Q1R9C9</accession>
<dbReference type="EC" id="7.1.1.-" evidence="1"/>
<dbReference type="EMBL" id="CP000243">
    <property type="protein sequence ID" value="ABE08035.1"/>
    <property type="molecule type" value="Genomic_DNA"/>
</dbReference>
<dbReference type="RefSeq" id="WP_000062997.1">
    <property type="nucleotide sequence ID" value="NZ_CP064825.1"/>
</dbReference>
<dbReference type="SMR" id="Q1R9C9"/>
<dbReference type="GeneID" id="93774886"/>
<dbReference type="KEGG" id="eci:UTI89_C2568"/>
<dbReference type="HOGENOM" id="CLU_119549_2_0_6"/>
<dbReference type="Proteomes" id="UP000001952">
    <property type="component" value="Chromosome"/>
</dbReference>
<dbReference type="GO" id="GO:0030964">
    <property type="term" value="C:NADH dehydrogenase complex"/>
    <property type="evidence" value="ECO:0007669"/>
    <property type="project" value="TreeGrafter"/>
</dbReference>
<dbReference type="GO" id="GO:0005886">
    <property type="term" value="C:plasma membrane"/>
    <property type="evidence" value="ECO:0007669"/>
    <property type="project" value="UniProtKB-SubCell"/>
</dbReference>
<dbReference type="GO" id="GO:0008137">
    <property type="term" value="F:NADH dehydrogenase (ubiquinone) activity"/>
    <property type="evidence" value="ECO:0007669"/>
    <property type="project" value="InterPro"/>
</dbReference>
<dbReference type="GO" id="GO:0050136">
    <property type="term" value="F:NADH:ubiquinone reductase (non-electrogenic) activity"/>
    <property type="evidence" value="ECO:0007669"/>
    <property type="project" value="UniProtKB-UniRule"/>
</dbReference>
<dbReference type="GO" id="GO:0048038">
    <property type="term" value="F:quinone binding"/>
    <property type="evidence" value="ECO:0007669"/>
    <property type="project" value="UniProtKB-KW"/>
</dbReference>
<dbReference type="FunFam" id="1.20.58.1610:FF:000003">
    <property type="entry name" value="NADH-quinone oxidoreductase subunit A"/>
    <property type="match status" value="1"/>
</dbReference>
<dbReference type="Gene3D" id="1.20.58.1610">
    <property type="entry name" value="NADH:ubiquinone/plastoquinone oxidoreductase, chain 3"/>
    <property type="match status" value="1"/>
</dbReference>
<dbReference type="HAMAP" id="MF_01394">
    <property type="entry name" value="NDH1_NuoA"/>
    <property type="match status" value="1"/>
</dbReference>
<dbReference type="InterPro" id="IPR023043">
    <property type="entry name" value="NAD(P)H_OxRDtase_bac/plastid"/>
</dbReference>
<dbReference type="InterPro" id="IPR000440">
    <property type="entry name" value="NADH_UbQ/plastoQ_OxRdtase_su3"/>
</dbReference>
<dbReference type="InterPro" id="IPR038430">
    <property type="entry name" value="NDAH_ubi_oxred_su3_sf"/>
</dbReference>
<dbReference type="PANTHER" id="PTHR11058:SF21">
    <property type="entry name" value="NADH-QUINONE OXIDOREDUCTASE SUBUNIT A"/>
    <property type="match status" value="1"/>
</dbReference>
<dbReference type="PANTHER" id="PTHR11058">
    <property type="entry name" value="NADH-UBIQUINONE OXIDOREDUCTASE CHAIN 3"/>
    <property type="match status" value="1"/>
</dbReference>
<dbReference type="Pfam" id="PF00507">
    <property type="entry name" value="Oxidored_q4"/>
    <property type="match status" value="1"/>
</dbReference>
<gene>
    <name evidence="1" type="primary">nuoA</name>
    <name type="ordered locus">UTI89_C2568</name>
</gene>